<reference key="1">
    <citation type="journal article" date="1998" name="DNA Res.">
        <title>Structural analysis of Arabidopsis thaliana chromosome 5. V. Sequence features of the regions of 1,381,565 bp covered by twenty one physically assigned P1 and TAC clones.</title>
        <authorList>
            <person name="Kaneko T."/>
            <person name="Kotani H."/>
            <person name="Nakamura Y."/>
            <person name="Sato S."/>
            <person name="Asamizu E."/>
            <person name="Miyajima N."/>
            <person name="Tabata S."/>
        </authorList>
    </citation>
    <scope>NUCLEOTIDE SEQUENCE [LARGE SCALE GENOMIC DNA]</scope>
    <source>
        <strain>cv. Columbia</strain>
    </source>
</reference>
<reference key="2">
    <citation type="journal article" date="2017" name="Plant J.">
        <title>Araport11: a complete reannotation of the Arabidopsis thaliana reference genome.</title>
        <authorList>
            <person name="Cheng C.Y."/>
            <person name="Krishnakumar V."/>
            <person name="Chan A.P."/>
            <person name="Thibaud-Nissen F."/>
            <person name="Schobel S."/>
            <person name="Town C.D."/>
        </authorList>
    </citation>
    <scope>GENOME REANNOTATION</scope>
    <source>
        <strain>cv. Columbia</strain>
    </source>
</reference>
<reference key="3">
    <citation type="journal article" date="2003" name="Science">
        <title>Empirical analysis of transcriptional activity in the Arabidopsis genome.</title>
        <authorList>
            <person name="Yamada K."/>
            <person name="Lim J."/>
            <person name="Dale J.M."/>
            <person name="Chen H."/>
            <person name="Shinn P."/>
            <person name="Palm C.J."/>
            <person name="Southwick A.M."/>
            <person name="Wu H.C."/>
            <person name="Kim C.J."/>
            <person name="Nguyen M."/>
            <person name="Pham P.K."/>
            <person name="Cheuk R.F."/>
            <person name="Karlin-Newmann G."/>
            <person name="Liu S.X."/>
            <person name="Lam B."/>
            <person name="Sakano H."/>
            <person name="Wu T."/>
            <person name="Yu G."/>
            <person name="Miranda M."/>
            <person name="Quach H.L."/>
            <person name="Tripp M."/>
            <person name="Chang C.H."/>
            <person name="Lee J.M."/>
            <person name="Toriumi M.J."/>
            <person name="Chan M.M."/>
            <person name="Tang C.C."/>
            <person name="Onodera C.S."/>
            <person name="Deng J.M."/>
            <person name="Akiyama K."/>
            <person name="Ansari Y."/>
            <person name="Arakawa T."/>
            <person name="Banh J."/>
            <person name="Banno F."/>
            <person name="Bowser L."/>
            <person name="Brooks S.Y."/>
            <person name="Carninci P."/>
            <person name="Chao Q."/>
            <person name="Choy N."/>
            <person name="Enju A."/>
            <person name="Goldsmith A.D."/>
            <person name="Gurjal M."/>
            <person name="Hansen N.F."/>
            <person name="Hayashizaki Y."/>
            <person name="Johnson-Hopson C."/>
            <person name="Hsuan V.W."/>
            <person name="Iida K."/>
            <person name="Karnes M."/>
            <person name="Khan S."/>
            <person name="Koesema E."/>
            <person name="Ishida J."/>
            <person name="Jiang P.X."/>
            <person name="Jones T."/>
            <person name="Kawai J."/>
            <person name="Kamiya A."/>
            <person name="Meyers C."/>
            <person name="Nakajima M."/>
            <person name="Narusaka M."/>
            <person name="Seki M."/>
            <person name="Sakurai T."/>
            <person name="Satou M."/>
            <person name="Tamse R."/>
            <person name="Vaysberg M."/>
            <person name="Wallender E.K."/>
            <person name="Wong C."/>
            <person name="Yamamura Y."/>
            <person name="Yuan S."/>
            <person name="Shinozaki K."/>
            <person name="Davis R.W."/>
            <person name="Theologis A."/>
            <person name="Ecker J.R."/>
        </authorList>
    </citation>
    <scope>NUCLEOTIDE SEQUENCE [LARGE SCALE MRNA]</scope>
    <source>
        <strain>cv. Columbia</strain>
    </source>
</reference>
<reference key="4">
    <citation type="journal article" date="2004" name="Plant Mol. Biol.">
        <title>Genome-wide analysis of the GRAS gene family in rice and Arabidopsis.</title>
        <authorList>
            <person name="Tian C."/>
            <person name="Wan P."/>
            <person name="Sun S."/>
            <person name="Li J."/>
            <person name="Chen M."/>
        </authorList>
    </citation>
    <scope>GENE FAMILY</scope>
</reference>
<reference key="5">
    <citation type="journal article" date="2008" name="Plant Mol. Biol.">
        <title>Large-scale analysis of the GRAS gene family in Arabidopsis thaliana.</title>
        <authorList>
            <person name="Lee M.-H."/>
            <person name="Kim B."/>
            <person name="Song S.-K."/>
            <person name="Heo J.-O."/>
            <person name="Yu N.-I."/>
            <person name="Lee S.A."/>
            <person name="Kim M."/>
            <person name="Kim D.G."/>
            <person name="Sohn S.O."/>
            <person name="Lim C.E."/>
            <person name="Chang K.S."/>
            <person name="Lee M.M."/>
            <person name="Lim J."/>
        </authorList>
    </citation>
    <scope>GENE FAMILY</scope>
    <scope>SUBCELLULAR LOCATION</scope>
    <scope>TISSUE SPECIFICITY</scope>
</reference>
<protein>
    <recommendedName>
        <fullName>Scarecrow-like protein 4</fullName>
        <shortName>AtSCL4</shortName>
    </recommendedName>
    <alternativeName>
        <fullName>GRAS family protein 32</fullName>
        <shortName>AtGRAS-32</shortName>
    </alternativeName>
</protein>
<comment type="function">
    <text evidence="1">Probable transcription factor involved in plant development.</text>
</comment>
<comment type="interaction">
    <interactant intactId="EBI-1238466">
        <id>Q9FL03</id>
    </interactant>
    <interactant intactId="EBI-4437350">
        <id>Q9SAK5</id>
        <label>APL</label>
    </interactant>
    <organismsDiffer>false</organismsDiffer>
    <experiments>3</experiments>
</comment>
<comment type="interaction">
    <interactant intactId="EBI-1238466">
        <id>Q9FL03</id>
    </interactant>
    <interactant intactId="EBI-15194203">
        <id>C0SVS4</id>
        <label>PHL11</label>
    </interactant>
    <organismsDiffer>false</organismsDiffer>
    <experiments>4</experiments>
</comment>
<comment type="interaction">
    <interactant intactId="EBI-1238466">
        <id>Q9FL03</id>
    </interactant>
    <interactant intactId="EBI-4443730">
        <id>Q8LAJ7</id>
        <label>PHL3</label>
    </interactant>
    <organismsDiffer>false</organismsDiffer>
    <experiments>3</experiments>
</comment>
<comment type="subcellular location">
    <subcellularLocation>
        <location evidence="4">Nucleus</location>
    </subcellularLocation>
</comment>
<comment type="tissue specificity">
    <text evidence="4">Expressed in leaves, sepals, filaments of stamen, and in the central cylinder of the elongation zone in root.</text>
</comment>
<comment type="similarity">
    <text evidence="5">Belongs to the GRAS family.</text>
</comment>
<comment type="sequence caution" evidence="5">
    <conflict type="erroneous initiation">
        <sequence resource="EMBL-CDS" id="AAL32616"/>
    </conflict>
    <text>Truncated N-terminus.</text>
</comment>
<comment type="sequence caution" evidence="5">
    <conflict type="frameshift">
        <sequence resource="EMBL-CDS" id="AAL32616"/>
    </conflict>
</comment>
<proteinExistence type="evidence at protein level"/>
<evidence type="ECO:0000250" key="1"/>
<evidence type="ECO:0000255" key="2">
    <source>
        <dbReference type="PROSITE-ProRule" id="PRU01191"/>
    </source>
</evidence>
<evidence type="ECO:0000256" key="3">
    <source>
        <dbReference type="SAM" id="MobiDB-lite"/>
    </source>
</evidence>
<evidence type="ECO:0000269" key="4">
    <source>
    </source>
</evidence>
<evidence type="ECO:0000305" key="5"/>
<keyword id="KW-0539">Nucleus</keyword>
<keyword id="KW-1185">Reference proteome</keyword>
<keyword id="KW-0804">Transcription</keyword>
<keyword id="KW-0805">Transcription regulation</keyword>
<name>SCL4_ARATH</name>
<dbReference type="EMBL" id="AB010700">
    <property type="protein sequence ID" value="BAB08619.1"/>
    <property type="molecule type" value="Genomic_DNA"/>
</dbReference>
<dbReference type="EMBL" id="CP002688">
    <property type="protein sequence ID" value="AED98261.1"/>
    <property type="molecule type" value="Genomic_DNA"/>
</dbReference>
<dbReference type="EMBL" id="AY062538">
    <property type="protein sequence ID" value="AAL32616.1"/>
    <property type="status" value="ALT_SEQ"/>
    <property type="molecule type" value="mRNA"/>
</dbReference>
<dbReference type="EMBL" id="BT002580">
    <property type="protein sequence ID" value="AAO00940.1"/>
    <property type="molecule type" value="mRNA"/>
</dbReference>
<dbReference type="RefSeq" id="NP_201478.1">
    <property type="nucleotide sequence ID" value="NM_126075.5"/>
</dbReference>
<dbReference type="SMR" id="Q9FL03"/>
<dbReference type="BioGRID" id="22052">
    <property type="interactions" value="11"/>
</dbReference>
<dbReference type="FunCoup" id="Q9FL03">
    <property type="interactions" value="285"/>
</dbReference>
<dbReference type="IntAct" id="Q9FL03">
    <property type="interactions" value="10"/>
</dbReference>
<dbReference type="STRING" id="3702.Q9FL03"/>
<dbReference type="PaxDb" id="3702-AT5G66770.1"/>
<dbReference type="ProteomicsDB" id="232812"/>
<dbReference type="EnsemblPlants" id="AT5G66770.1">
    <property type="protein sequence ID" value="AT5G66770.1"/>
    <property type="gene ID" value="AT5G66770"/>
</dbReference>
<dbReference type="GeneID" id="836810"/>
<dbReference type="Gramene" id="AT5G66770.1">
    <property type="protein sequence ID" value="AT5G66770.1"/>
    <property type="gene ID" value="AT5G66770"/>
</dbReference>
<dbReference type="KEGG" id="ath:AT5G66770"/>
<dbReference type="Araport" id="AT5G66770"/>
<dbReference type="TAIR" id="AT5G66770"/>
<dbReference type="eggNOG" id="ENOG502QTXA">
    <property type="taxonomic scope" value="Eukaryota"/>
</dbReference>
<dbReference type="HOGENOM" id="CLU_011924_0_5_1"/>
<dbReference type="InParanoid" id="Q9FL03"/>
<dbReference type="OMA" id="EPNMTRD"/>
<dbReference type="PhylomeDB" id="Q9FL03"/>
<dbReference type="PRO" id="PR:Q9FL03"/>
<dbReference type="Proteomes" id="UP000006548">
    <property type="component" value="Chromosome 5"/>
</dbReference>
<dbReference type="ExpressionAtlas" id="Q9FL03">
    <property type="expression patterns" value="baseline and differential"/>
</dbReference>
<dbReference type="GO" id="GO:0005634">
    <property type="term" value="C:nucleus"/>
    <property type="evidence" value="ECO:0007669"/>
    <property type="project" value="UniProtKB-SubCell"/>
</dbReference>
<dbReference type="GO" id="GO:0003700">
    <property type="term" value="F:DNA-binding transcription factor activity"/>
    <property type="evidence" value="ECO:0000250"/>
    <property type="project" value="TAIR"/>
</dbReference>
<dbReference type="GO" id="GO:0006355">
    <property type="term" value="P:regulation of DNA-templated transcription"/>
    <property type="evidence" value="ECO:0000304"/>
    <property type="project" value="TAIR"/>
</dbReference>
<dbReference type="InterPro" id="IPR005202">
    <property type="entry name" value="TF_GRAS"/>
</dbReference>
<dbReference type="PANTHER" id="PTHR31636">
    <property type="entry name" value="OSJNBA0084A10.13 PROTEIN-RELATED"/>
    <property type="match status" value="1"/>
</dbReference>
<dbReference type="Pfam" id="PF03514">
    <property type="entry name" value="GRAS"/>
    <property type="match status" value="1"/>
</dbReference>
<dbReference type="PROSITE" id="PS50985">
    <property type="entry name" value="GRAS"/>
    <property type="match status" value="1"/>
</dbReference>
<accession>Q9FL03</accession>
<accession>Q8W4I8</accession>
<organism>
    <name type="scientific">Arabidopsis thaliana</name>
    <name type="common">Mouse-ear cress</name>
    <dbReference type="NCBI Taxonomy" id="3702"/>
    <lineage>
        <taxon>Eukaryota</taxon>
        <taxon>Viridiplantae</taxon>
        <taxon>Streptophyta</taxon>
        <taxon>Embryophyta</taxon>
        <taxon>Tracheophyta</taxon>
        <taxon>Spermatophyta</taxon>
        <taxon>Magnoliopsida</taxon>
        <taxon>eudicotyledons</taxon>
        <taxon>Gunneridae</taxon>
        <taxon>Pentapetalae</taxon>
        <taxon>rosids</taxon>
        <taxon>malvids</taxon>
        <taxon>Brassicales</taxon>
        <taxon>Brassicaceae</taxon>
        <taxon>Camelineae</taxon>
        <taxon>Arabidopsis</taxon>
    </lineage>
</organism>
<sequence length="584" mass="64587">MAYMCTDSGNLMAIAQQVIKQKQQQEQQQQQHHQDHQIFGINPLSLNPWPNTSLGFGLSGSAFPDPFQVTGGGDSNDPGFPFPNLDHHHATTTGGGFRLSDFGGGTGGGEFESDEWMETLISGGDSVADGPDCDTWHDNPDYVIYGPDPFDTYPSRLSVQPSDLNRVIDTSSPLPPPTLWPPSSPLSIPPLTHESPTKEDPETNDSEDDDFDLEPPLLKAIYDCARISDSDPNEASKTLLQIRESVSELGDPTERVAFYFTEALSNRLSPNSPATSSSSSSTEDLILSYKTLNDACPYSKFAHLTANQAILEATEKSNKIHIVDFGIVQGIQWPALLQALATRTSGKPTQIRVSGIPAPSLGESPEPSLIATGNRLRDFAKVLDLNFDFIPILTPIHLLNGSSFRVDPDEVLAVNFMLQLYKLLDETPTIVDTALRLAKSLNPRVVTLGEYEVSLNRVGFANRVKNALQFYSAVFESLEPNLGRDSEERVRVERELFGRRISGLIGPEKTGIHRERMEEKEQWRVLMENAGFESVKLSNYAVSQAKILLWNYNYSNLYSIVESKPGFISLAWNDLPLLTLSSWR</sequence>
<gene>
    <name type="primary">SCL4</name>
    <name type="ordered locus">At5g66770</name>
    <name type="ORF">MUD21.1</name>
</gene>
<feature type="chain" id="PRO_0000350848" description="Scarecrow-like protein 4">
    <location>
        <begin position="1"/>
        <end position="584"/>
    </location>
</feature>
<feature type="domain" description="GRAS" evidence="2">
    <location>
        <begin position="204"/>
        <end position="584"/>
    </location>
</feature>
<feature type="region of interest" description="Disordered" evidence="3">
    <location>
        <begin position="166"/>
        <end position="213"/>
    </location>
</feature>
<feature type="region of interest" description="Leucine repeat I (LRI)" evidence="2">
    <location>
        <begin position="211"/>
        <end position="270"/>
    </location>
</feature>
<feature type="region of interest" description="VHIID" evidence="2">
    <location>
        <begin position="289"/>
        <end position="355"/>
    </location>
</feature>
<feature type="region of interest" description="Leucine repeat II (LRII)" evidence="2">
    <location>
        <begin position="371"/>
        <end position="403"/>
    </location>
</feature>
<feature type="region of interest" description="PFYRE" evidence="2">
    <location>
        <begin position="412"/>
        <end position="503"/>
    </location>
</feature>
<feature type="region of interest" description="SAW" evidence="2">
    <location>
        <begin position="506"/>
        <end position="584"/>
    </location>
</feature>
<feature type="short sequence motif" description="VHIID" evidence="2">
    <location>
        <begin position="320"/>
        <end position="324"/>
    </location>
</feature>
<feature type="short sequence motif" description="LXXLL motif" evidence="2">
    <location>
        <begin position="420"/>
        <end position="424"/>
    </location>
</feature>
<feature type="compositionally biased region" description="Pro residues" evidence="3">
    <location>
        <begin position="173"/>
        <end position="188"/>
    </location>
</feature>
<feature type="compositionally biased region" description="Acidic residues" evidence="3">
    <location>
        <begin position="202"/>
        <end position="213"/>
    </location>
</feature>